<name>ZNOS_HUMAN</name>
<keyword id="KW-0472">Membrane</keyword>
<keyword id="KW-1185">Reference proteome</keyword>
<keyword id="KW-0812">Transmembrane</keyword>
<keyword id="KW-1133">Transmembrane helix</keyword>
<sequence>MRFRRLTPGYFRVLQMQVAGELKAEPRSLLAGVVATVLAVLGLGGSCYAVWKMVGQRRVPRAP</sequence>
<organism>
    <name type="scientific">Homo sapiens</name>
    <name type="common">Human</name>
    <dbReference type="NCBI Taxonomy" id="9606"/>
    <lineage>
        <taxon>Eukaryota</taxon>
        <taxon>Metazoa</taxon>
        <taxon>Chordata</taxon>
        <taxon>Craniata</taxon>
        <taxon>Vertebrata</taxon>
        <taxon>Euteleostomi</taxon>
        <taxon>Mammalia</taxon>
        <taxon>Eutheria</taxon>
        <taxon>Euarchontoglires</taxon>
        <taxon>Primates</taxon>
        <taxon>Haplorrhini</taxon>
        <taxon>Catarrhini</taxon>
        <taxon>Hominidae</taxon>
        <taxon>Homo</taxon>
    </lineage>
</organism>
<proteinExistence type="inferred from homology"/>
<comment type="subcellular location">
    <subcellularLocation>
        <location evidence="1">Membrane</location>
        <topology evidence="1">Single-pass membrane protein</topology>
    </subcellularLocation>
</comment>
<feature type="chain" id="PRO_0000452005" description="Transmembrane protein ZNF593OS">
    <location>
        <begin position="1"/>
        <end position="63"/>
    </location>
</feature>
<feature type="transmembrane region" description="Helical" evidence="1">
    <location>
        <begin position="30"/>
        <end position="50"/>
    </location>
</feature>
<protein>
    <recommendedName>
        <fullName evidence="2">Transmembrane protein ZNF593OS</fullName>
    </recommendedName>
    <alternativeName>
        <fullName>ZNF593 opposite strand protein</fullName>
    </alternativeName>
</protein>
<evidence type="ECO:0000255" key="1"/>
<evidence type="ECO:0000305" key="2"/>
<evidence type="ECO:0000312" key="3">
    <source>
        <dbReference type="HGNC" id="HGNC:41278"/>
    </source>
</evidence>
<accession>A0A0U1RRA0</accession>
<gene>
    <name evidence="3" type="primary">ZNF593OS</name>
</gene>
<dbReference type="EMBL" id="AL391650">
    <property type="status" value="NOT_ANNOTATED_CDS"/>
    <property type="molecule type" value="Genomic_DNA"/>
</dbReference>
<dbReference type="CCDS" id="CCDS90890.1"/>
<dbReference type="RefSeq" id="NP_001382397.1">
    <property type="nucleotide sequence ID" value="NM_001395468.1"/>
</dbReference>
<dbReference type="BioMuta" id="ENSG00000236782"/>
<dbReference type="MassIVE" id="A0A0U1RRA0"/>
<dbReference type="PeptideAtlas" id="A0A0U1RRA0"/>
<dbReference type="Ensembl" id="ENST00000407889.6">
    <property type="protein sequence ID" value="ENSP00000489065.1"/>
    <property type="gene ID" value="ENSG00000236782.8"/>
</dbReference>
<dbReference type="Ensembl" id="ENST00000433939.7">
    <property type="protein sequence ID" value="ENSP00000489416.1"/>
    <property type="gene ID" value="ENSG00000236782.8"/>
</dbReference>
<dbReference type="Ensembl" id="ENST00000448923.2">
    <property type="protein sequence ID" value="ENSP00000489429.1"/>
    <property type="gene ID" value="ENSG00000236782.8"/>
</dbReference>
<dbReference type="Ensembl" id="ENST00000648649.1">
    <property type="protein sequence ID" value="ENSP00000497214.1"/>
    <property type="gene ID" value="ENSG00000236782.8"/>
</dbReference>
<dbReference type="GeneID" id="118568799"/>
<dbReference type="MANE-Select" id="ENST00000433939.7">
    <property type="protein sequence ID" value="ENSP00000489416.1"/>
    <property type="RefSeq nucleotide sequence ID" value="NM_001395468.1"/>
    <property type="RefSeq protein sequence ID" value="NP_001382397.1"/>
</dbReference>
<dbReference type="AGR" id="HGNC:41278"/>
<dbReference type="GeneCards" id="ZNF593OS"/>
<dbReference type="HGNC" id="HGNC:41278">
    <property type="gene designation" value="ZNF593OS"/>
</dbReference>
<dbReference type="HPA" id="ENSG00000236782">
    <property type="expression patterns" value="Tissue enriched (retina)"/>
</dbReference>
<dbReference type="neXtProt" id="NX_A0A0U1RRA0"/>
<dbReference type="VEuPathDB" id="HostDB:ENSG00000236782"/>
<dbReference type="GeneTree" id="ENSGT01130000278353"/>
<dbReference type="InParanoid" id="A0A0U1RRA0"/>
<dbReference type="OMA" id="HLTPGYF"/>
<dbReference type="PAN-GO" id="A0A0U1RRA0">
    <property type="GO annotations" value="0 GO annotations based on evolutionary models"/>
</dbReference>
<dbReference type="Proteomes" id="UP000005640">
    <property type="component" value="Chromosome 1"/>
</dbReference>
<dbReference type="RNAct" id="A0A0U1RRA0">
    <property type="molecule type" value="protein"/>
</dbReference>
<dbReference type="Bgee" id="ENSG00000236782">
    <property type="expression patterns" value="Expressed in primordial germ cell in gonad and 96 other cell types or tissues"/>
</dbReference>
<dbReference type="GO" id="GO:0016020">
    <property type="term" value="C:membrane"/>
    <property type="evidence" value="ECO:0007669"/>
    <property type="project" value="UniProtKB-SubCell"/>
</dbReference>
<reference key="1">
    <citation type="journal article" date="2006" name="Nature">
        <title>The DNA sequence and biological annotation of human chromosome 1.</title>
        <authorList>
            <person name="Gregory S.G."/>
            <person name="Barlow K.F."/>
            <person name="McLay K.E."/>
            <person name="Kaul R."/>
            <person name="Swarbreck D."/>
            <person name="Dunham A."/>
            <person name="Scott C.E."/>
            <person name="Howe K.L."/>
            <person name="Woodfine K."/>
            <person name="Spencer C.C.A."/>
            <person name="Jones M.C."/>
            <person name="Gillson C."/>
            <person name="Searle S."/>
            <person name="Zhou Y."/>
            <person name="Kokocinski F."/>
            <person name="McDonald L."/>
            <person name="Evans R."/>
            <person name="Phillips K."/>
            <person name="Atkinson A."/>
            <person name="Cooper R."/>
            <person name="Jones C."/>
            <person name="Hall R.E."/>
            <person name="Andrews T.D."/>
            <person name="Lloyd C."/>
            <person name="Ainscough R."/>
            <person name="Almeida J.P."/>
            <person name="Ambrose K.D."/>
            <person name="Anderson F."/>
            <person name="Andrew R.W."/>
            <person name="Ashwell R.I.S."/>
            <person name="Aubin K."/>
            <person name="Babbage A.K."/>
            <person name="Bagguley C.L."/>
            <person name="Bailey J."/>
            <person name="Beasley H."/>
            <person name="Bethel G."/>
            <person name="Bird C.P."/>
            <person name="Bray-Allen S."/>
            <person name="Brown J.Y."/>
            <person name="Brown A.J."/>
            <person name="Buckley D."/>
            <person name="Burton J."/>
            <person name="Bye J."/>
            <person name="Carder C."/>
            <person name="Chapman J.C."/>
            <person name="Clark S.Y."/>
            <person name="Clarke G."/>
            <person name="Clee C."/>
            <person name="Cobley V."/>
            <person name="Collier R.E."/>
            <person name="Corby N."/>
            <person name="Coville G.J."/>
            <person name="Davies J."/>
            <person name="Deadman R."/>
            <person name="Dunn M."/>
            <person name="Earthrowl M."/>
            <person name="Ellington A.G."/>
            <person name="Errington H."/>
            <person name="Frankish A."/>
            <person name="Frankland J."/>
            <person name="French L."/>
            <person name="Garner P."/>
            <person name="Garnett J."/>
            <person name="Gay L."/>
            <person name="Ghori M.R.J."/>
            <person name="Gibson R."/>
            <person name="Gilby L.M."/>
            <person name="Gillett W."/>
            <person name="Glithero R.J."/>
            <person name="Grafham D.V."/>
            <person name="Griffiths C."/>
            <person name="Griffiths-Jones S."/>
            <person name="Grocock R."/>
            <person name="Hammond S."/>
            <person name="Harrison E.S.I."/>
            <person name="Hart E."/>
            <person name="Haugen E."/>
            <person name="Heath P.D."/>
            <person name="Holmes S."/>
            <person name="Holt K."/>
            <person name="Howden P.J."/>
            <person name="Hunt A.R."/>
            <person name="Hunt S.E."/>
            <person name="Hunter G."/>
            <person name="Isherwood J."/>
            <person name="James R."/>
            <person name="Johnson C."/>
            <person name="Johnson D."/>
            <person name="Joy A."/>
            <person name="Kay M."/>
            <person name="Kershaw J.K."/>
            <person name="Kibukawa M."/>
            <person name="Kimberley A.M."/>
            <person name="King A."/>
            <person name="Knights A.J."/>
            <person name="Lad H."/>
            <person name="Laird G."/>
            <person name="Lawlor S."/>
            <person name="Leongamornlert D.A."/>
            <person name="Lloyd D.M."/>
            <person name="Loveland J."/>
            <person name="Lovell J."/>
            <person name="Lush M.J."/>
            <person name="Lyne R."/>
            <person name="Martin S."/>
            <person name="Mashreghi-Mohammadi M."/>
            <person name="Matthews L."/>
            <person name="Matthews N.S.W."/>
            <person name="McLaren S."/>
            <person name="Milne S."/>
            <person name="Mistry S."/>
            <person name="Moore M.J.F."/>
            <person name="Nickerson T."/>
            <person name="O'Dell C.N."/>
            <person name="Oliver K."/>
            <person name="Palmeiri A."/>
            <person name="Palmer S.A."/>
            <person name="Parker A."/>
            <person name="Patel D."/>
            <person name="Pearce A.V."/>
            <person name="Peck A.I."/>
            <person name="Pelan S."/>
            <person name="Phelps K."/>
            <person name="Phillimore B.J."/>
            <person name="Plumb R."/>
            <person name="Rajan J."/>
            <person name="Raymond C."/>
            <person name="Rouse G."/>
            <person name="Saenphimmachak C."/>
            <person name="Sehra H.K."/>
            <person name="Sheridan E."/>
            <person name="Shownkeen R."/>
            <person name="Sims S."/>
            <person name="Skuce C.D."/>
            <person name="Smith M."/>
            <person name="Steward C."/>
            <person name="Subramanian S."/>
            <person name="Sycamore N."/>
            <person name="Tracey A."/>
            <person name="Tromans A."/>
            <person name="Van Helmond Z."/>
            <person name="Wall M."/>
            <person name="Wallis J.M."/>
            <person name="White S."/>
            <person name="Whitehead S.L."/>
            <person name="Wilkinson J.E."/>
            <person name="Willey D.L."/>
            <person name="Williams H."/>
            <person name="Wilming L."/>
            <person name="Wray P.W."/>
            <person name="Wu Z."/>
            <person name="Coulson A."/>
            <person name="Vaudin M."/>
            <person name="Sulston J.E."/>
            <person name="Durbin R.M."/>
            <person name="Hubbard T."/>
            <person name="Wooster R."/>
            <person name="Dunham I."/>
            <person name="Carter N.P."/>
            <person name="McVean G."/>
            <person name="Ross M.T."/>
            <person name="Harrow J."/>
            <person name="Olson M.V."/>
            <person name="Beck S."/>
            <person name="Rogers J."/>
            <person name="Bentley D.R."/>
        </authorList>
    </citation>
    <scope>NUCLEOTIDE SEQUENCE [LARGE SCALE GENOMIC DNA]</scope>
</reference>